<sequence>MEDFKDFTEVTQFTNVQYLGCSQLVNNDNDNEMKALMKVLDEQKGAQTINVTLVVPHNISGTVKLIDAQGKVLSSFSLVNIRFCIRGESSTSQNNCFGISFTHKISVGEHNSSDILHQCHVFRTSKAETAAKALYSFSYAFSNKNVSSESNRLEFQFESILEVKENDGTVEKPSWKLCPQHNGVFKVRRDREKKIVVQLRQIDGFLLNIKKCFGMLLAAGRNLRHSDLQLLEMDRNATGTDSAVFVIEANWDPRVHMFEVLNTETPRDTRVFMTVAIDVIVSEISEPIRFSMEAMSRVFHEHERFYKTPQTVVSEEFTLVLEKSCDQSDPNDRKLTFISLESDSDRKRSKQNLGKSPSRMPTQLLHPTGDDESDCDEPLLSGSGKVSQECKEEHLEMWDQLIENWDQQSDRPQKISELVLDGIPDKLRGRVWQLLSNVRILAIDQPDLVEKYHIFLSQPCPSEQVIMRDIHRTFPAHDYFKESQGKGQQSLYKISKVYSLYDEEVSYCQGLSFLAASLLLHMPEEQAFCTLVKIMFNYGLRDLFKLGFDNLHLRFFQLTALLKDYIPDLSHHLEHIGIETHMYASQWFLTLFTAKFPLQMVFFILDLFLSQGMNTIFHISLALLDDAKTDLLQLDFEGTLKYFRVSLPRKYRTEASTKCLIHKAVKFRLNHSKLEVYENEYKRIKELERENEDPVLRMEKEIGRHQANTLRLERENDDLAHELVTSKIELRRKLDVAEDQIETSANAIERLTRQNMDILEENKNLMREYEQIKEMYRRDVLRLEENGSRAEKLLAEYKKLFSERSKRAENEREHFEVQKKAIIARISDCDKCWPAVCEWEKNRSPVHSASTPTGPDLLTKLEEREDHIKNLEIDLAQTKLSLVEAECRNQDLTHQLMAQSESDGKKWFKKTITQLKEVGSSLKHHERSNSSVTP</sequence>
<keyword id="KW-0025">Alternative splicing</keyword>
<keyword id="KW-0175">Coiled coil</keyword>
<keyword id="KW-0343">GTPase activation</keyword>
<keyword id="KW-1185">Reference proteome</keyword>
<gene>
    <name evidence="6 11" type="primary">tbc-11</name>
    <name evidence="11" type="ORF">F35H12.2</name>
</gene>
<proteinExistence type="evidence at protein level"/>
<comment type="function">
    <text evidence="5 8">Rab GTPase activating protein for the small GTPases rab-6.1 and rab-6.2 (Probable). Probably acts through rab-6.1 and rab-6.2 to play a role in microRNA-mediated gene silencing in different tissue types (PubMed:33826611). Required for seam cell division and alae formation (PubMed:33826611).</text>
</comment>
<comment type="alternative products">
    <event type="alternative splicing"/>
    <isoform>
        <id>H2KZZ6-1</id>
        <name evidence="11">b</name>
        <sequence type="displayed"/>
    </isoform>
    <isoform>
        <id>H2KZZ6-2</id>
        <name evidence="10">a</name>
        <sequence type="described" ref="VSP_061182"/>
    </isoform>
    <isoform>
        <id>H2KZZ6-3</id>
        <name evidence="12">c</name>
        <sequence type="described" ref="VSP_061180 VSP_061182"/>
    </isoform>
    <isoform>
        <id>H2KZZ6-4</id>
        <name evidence="13">d</name>
        <sequence type="described" ref="VSP_061181 VSP_061182"/>
    </isoform>
</comment>
<comment type="disruption phenotype">
    <text evidence="5">RNAi-mediated knockdown results in increased expression of the lin-41 protein, which is a target of the let-7 microRNA.</text>
</comment>
<organism evidence="9">
    <name type="scientific">Caenorhabditis elegans</name>
    <dbReference type="NCBI Taxonomy" id="6239"/>
    <lineage>
        <taxon>Eukaryota</taxon>
        <taxon>Metazoa</taxon>
        <taxon>Ecdysozoa</taxon>
        <taxon>Nematoda</taxon>
        <taxon>Chromadorea</taxon>
        <taxon>Rhabditida</taxon>
        <taxon>Rhabditina</taxon>
        <taxon>Rhabditomorpha</taxon>
        <taxon>Rhabditoidea</taxon>
        <taxon>Rhabditidae</taxon>
        <taxon>Peloderinae</taxon>
        <taxon>Caenorhabditis</taxon>
    </lineage>
</organism>
<evidence type="ECO:0000255" key="1"/>
<evidence type="ECO:0000255" key="2">
    <source>
        <dbReference type="PROSITE-ProRule" id="PRU00148"/>
    </source>
</evidence>
<evidence type="ECO:0000255" key="3">
    <source>
        <dbReference type="PROSITE-ProRule" id="PRU00163"/>
    </source>
</evidence>
<evidence type="ECO:0000256" key="4">
    <source>
        <dbReference type="SAM" id="MobiDB-lite"/>
    </source>
</evidence>
<evidence type="ECO:0000269" key="5">
    <source>
    </source>
</evidence>
<evidence type="ECO:0000303" key="6">
    <source>
    </source>
</evidence>
<evidence type="ECO:0000305" key="7"/>
<evidence type="ECO:0000305" key="8">
    <source>
    </source>
</evidence>
<evidence type="ECO:0000312" key="9">
    <source>
        <dbReference type="Proteomes" id="UP000001940"/>
    </source>
</evidence>
<evidence type="ECO:0000312" key="10">
    <source>
        <dbReference type="WormBase" id="F35H12.2a"/>
    </source>
</evidence>
<evidence type="ECO:0000312" key="11">
    <source>
        <dbReference type="WormBase" id="F35H12.2b"/>
    </source>
</evidence>
<evidence type="ECO:0000312" key="12">
    <source>
        <dbReference type="WormBase" id="F35H12.2c"/>
    </source>
</evidence>
<evidence type="ECO:0000312" key="13">
    <source>
        <dbReference type="WormBase" id="F35H12.2d"/>
    </source>
</evidence>
<feature type="chain" id="PRO_0000453576" description="Rab GTPase-activating protein tbc-11">
    <location>
        <begin position="1"/>
        <end position="934"/>
    </location>
</feature>
<feature type="domain" description="PID" evidence="2">
    <location>
        <begin position="16"/>
        <end position="134"/>
    </location>
</feature>
<feature type="domain" description="Rab-GAP TBC" evidence="3">
    <location>
        <begin position="422"/>
        <end position="612"/>
    </location>
</feature>
<feature type="region of interest" description="Disordered" evidence="4">
    <location>
        <begin position="337"/>
        <end position="383"/>
    </location>
</feature>
<feature type="coiled-coil region" evidence="1">
    <location>
        <begin position="727"/>
        <end position="800"/>
    </location>
</feature>
<feature type="coiled-coil region" evidence="1">
    <location>
        <begin position="861"/>
        <end position="895"/>
    </location>
</feature>
<feature type="compositionally biased region" description="Polar residues" evidence="4">
    <location>
        <begin position="351"/>
        <end position="361"/>
    </location>
</feature>
<feature type="splice variant" id="VSP_061180" description="In isoform c." evidence="7">
    <location>
        <begin position="1"/>
        <end position="359"/>
    </location>
</feature>
<feature type="splice variant" id="VSP_061181" description="In isoform d." evidence="7">
    <original>E</original>
    <variation>ESD</variation>
    <location>
        <position position="372"/>
    </location>
</feature>
<feature type="splice variant" id="VSP_061182" description="In isoform a, isoform c and isoform d." evidence="7">
    <location>
        <begin position="438"/>
        <end position="441"/>
    </location>
</feature>
<feature type="mutagenesis site" description="In ok257; Disrupts seam cell division and alae formation. Reduces the total number of microRNAs and reduces microRNA-mediated gene silencing. Disrupts the localization of alg-1 to endomembranes. Increases the expression of lin-41 protein, which is a target for the let-7 microRNA. Increases the number of animals with a burst vulva phenotype in a let-7 n2853 mutant background. The seam cell division and alae formation defects are suppressed in a rab-6.1 or rab-6.2 RNAi mutant background." evidence="5">
    <location>
        <begin position="323"/>
        <end position="402"/>
    </location>
</feature>
<feature type="mutagenesis site" description="In qbc24; males are sterile. Disrupts seam cell division and alae formation. Disrupts the localization of alg-1 to endomembranes, and instead alg-1 accumulates in the perinuclear region. Reduces the total number of microRNAs and reduces microRNA-mediated gene silencing. Specifically reduces the association of alg-1 with microRNAs. Increases the expression of lin-41 protein, which is a target for the let-7 microRNA. The seam cell division and alae formation defects are suppressed in a rab-6.1 or rab-6.2 RNAi mutant background. The localization of alg-1 is restored in a rab-6.1 RNAi mutant background." evidence="5">
    <original>S</original>
    <variation>P</variation>
    <location>
        <position position="490"/>
    </location>
</feature>
<protein>
    <recommendedName>
        <fullName evidence="6">Rab GTPase-activating protein tbc-11</fullName>
        <shortName evidence="6">RabGAP tbc-11</shortName>
    </recommendedName>
    <alternativeName>
        <fullName evidence="7">TBC1 domain family member 11</fullName>
    </alternativeName>
</protein>
<accession>H2KZZ6</accession>
<accession>A0A4V0IKC0</accession>
<accession>H2KZZ5</accession>
<accession>Q5LK42</accession>
<name>TBC11_CAEEL</name>
<reference evidence="9" key="1">
    <citation type="journal article" date="1998" name="Science">
        <title>Genome sequence of the nematode C. elegans: a platform for investigating biology.</title>
        <authorList>
            <consortium name="The C. elegans sequencing consortium"/>
        </authorList>
    </citation>
    <scope>NUCLEOTIDE SEQUENCE [LARGE SCALE GENOMIC DNA]</scope>
    <source>
        <strain evidence="9">Bristol N2</strain>
    </source>
</reference>
<reference evidence="7" key="2">
    <citation type="journal article" date="2021" name="PLoS Genet.">
        <title>The RabGAP TBC-11 controls Argonaute localization for proper microRNA function in C. elegans.</title>
        <authorList>
            <person name="Michaud P."/>
            <person name="Shah V.N."/>
            <person name="Adjibade P."/>
            <person name="Houle F."/>
            <person name="Quevillon Huberdeau M."/>
            <person name="Rioux R."/>
            <person name="Lavoie-Ouellet C."/>
            <person name="Gu W."/>
            <person name="Mazroui R."/>
            <person name="Simard M.J."/>
        </authorList>
    </citation>
    <scope>FUNCTION</scope>
    <scope>DISRUPTION PHENOTYPE</scope>
    <scope>MUTAGENESIS OF 323-LYS--ILE-402 AND SER-490</scope>
</reference>
<dbReference type="EMBL" id="BX284606">
    <property type="protein sequence ID" value="CCD70614.1"/>
    <property type="molecule type" value="Genomic_DNA"/>
</dbReference>
<dbReference type="EMBL" id="BX284606">
    <property type="protein sequence ID" value="CCD70615.1"/>
    <property type="molecule type" value="Genomic_DNA"/>
</dbReference>
<dbReference type="EMBL" id="BX284606">
    <property type="protein sequence ID" value="CCD70616.1"/>
    <property type="molecule type" value="Genomic_DNA"/>
</dbReference>
<dbReference type="EMBL" id="BX284606">
    <property type="protein sequence ID" value="VTW47567.1"/>
    <property type="molecule type" value="Genomic_DNA"/>
</dbReference>
<dbReference type="RefSeq" id="NP_001024629.1">
    <property type="nucleotide sequence ID" value="NM_001029458.4"/>
</dbReference>
<dbReference type="RefSeq" id="NP_001360743.1">
    <molecule id="H2KZZ6-4"/>
    <property type="nucleotide sequence ID" value="NM_001373217.4"/>
</dbReference>
<dbReference type="RefSeq" id="NP_001367822.1">
    <molecule id="H2KZZ6-3"/>
    <property type="nucleotide sequence ID" value="NM_001380899.2"/>
</dbReference>
<dbReference type="RefSeq" id="NP_508178.2">
    <molecule id="H2KZZ6-1"/>
    <property type="nucleotide sequence ID" value="NM_075777.4"/>
</dbReference>
<dbReference type="RefSeq" id="NP_508179.2">
    <molecule id="H2KZZ6-2"/>
    <property type="nucleotide sequence ID" value="NM_075778.2"/>
</dbReference>
<dbReference type="SMR" id="H2KZZ6"/>
<dbReference type="FunCoup" id="H2KZZ6">
    <property type="interactions" value="3405"/>
</dbReference>
<dbReference type="STRING" id="6239.F35H12.2b.1"/>
<dbReference type="PaxDb" id="6239-F35H12.2b"/>
<dbReference type="EnsemblMetazoa" id="F35H12.2a.1">
    <molecule id="H2KZZ6-2"/>
    <property type="protein sequence ID" value="F35H12.2a.1"/>
    <property type="gene ID" value="WBGene00018075"/>
</dbReference>
<dbReference type="EnsemblMetazoa" id="F35H12.2b.1">
    <molecule id="H2KZZ6-1"/>
    <property type="protein sequence ID" value="F35H12.2b.1"/>
    <property type="gene ID" value="WBGene00018075"/>
</dbReference>
<dbReference type="EnsemblMetazoa" id="F35H12.2c.1">
    <molecule id="H2KZZ6-3"/>
    <property type="protein sequence ID" value="F35H12.2c.1"/>
    <property type="gene ID" value="WBGene00018075"/>
</dbReference>
<dbReference type="EnsemblMetazoa" id="F35H12.2c.2">
    <molecule id="H2KZZ6-3"/>
    <property type="protein sequence ID" value="F35H12.2c.2"/>
    <property type="gene ID" value="WBGene00018075"/>
</dbReference>
<dbReference type="EnsemblMetazoa" id="F35H12.2c.3">
    <molecule id="H2KZZ6-3"/>
    <property type="protein sequence ID" value="F35H12.2c.3"/>
    <property type="gene ID" value="WBGene00018075"/>
</dbReference>
<dbReference type="EnsemblMetazoa" id="F35H12.2c.4">
    <molecule id="H2KZZ6-3"/>
    <property type="protein sequence ID" value="F35H12.2c.4"/>
    <property type="gene ID" value="WBGene00018075"/>
</dbReference>
<dbReference type="EnsemblMetazoa" id="F35H12.2d.1">
    <molecule id="H2KZZ6-4"/>
    <property type="protein sequence ID" value="F35H12.2d.1"/>
    <property type="gene ID" value="WBGene00018075"/>
</dbReference>
<dbReference type="GeneID" id="180444"/>
<dbReference type="KEGG" id="cel:CELE_F35H12.2"/>
<dbReference type="UCSC" id="F35H12.2b">
    <property type="organism name" value="c. elegans"/>
</dbReference>
<dbReference type="AGR" id="WB:WBGene00018075"/>
<dbReference type="CTD" id="180444"/>
<dbReference type="WormBase" id="F35H12.2a">
    <molecule id="H2KZZ6-2"/>
    <property type="protein sequence ID" value="CE30971"/>
    <property type="gene ID" value="WBGene00018075"/>
    <property type="gene designation" value="tbc-11"/>
</dbReference>
<dbReference type="WormBase" id="F35H12.2b">
    <molecule id="H2KZZ6-1"/>
    <property type="protein sequence ID" value="CE30972"/>
    <property type="gene ID" value="WBGene00018075"/>
    <property type="gene designation" value="tbc-11"/>
</dbReference>
<dbReference type="WormBase" id="F35H12.2c">
    <molecule id="H2KZZ6-3"/>
    <property type="protein sequence ID" value="CE37909"/>
    <property type="gene ID" value="WBGene00018075"/>
    <property type="gene designation" value="tbc-11"/>
</dbReference>
<dbReference type="WormBase" id="F35H12.2d">
    <molecule id="H2KZZ6-4"/>
    <property type="protein sequence ID" value="CE53416"/>
    <property type="gene ID" value="WBGene00018075"/>
    <property type="gene designation" value="tbc-11"/>
</dbReference>
<dbReference type="eggNOG" id="KOG1102">
    <property type="taxonomic scope" value="Eukaryota"/>
</dbReference>
<dbReference type="GeneTree" id="ENSGT00940000168693"/>
<dbReference type="HOGENOM" id="CLU_007394_0_0_1"/>
<dbReference type="InParanoid" id="H2KZZ6"/>
<dbReference type="OMA" id="MHSMGYV"/>
<dbReference type="OrthoDB" id="295078at2759"/>
<dbReference type="PhylomeDB" id="H2KZZ6"/>
<dbReference type="Reactome" id="R-CEL-8854214">
    <property type="pathway name" value="TBC/RABGAPs"/>
</dbReference>
<dbReference type="PRO" id="PR:H2KZZ6"/>
<dbReference type="Proteomes" id="UP000001940">
    <property type="component" value="Chromosome X"/>
</dbReference>
<dbReference type="Bgee" id="WBGene00018075">
    <property type="expression patterns" value="Expressed in pharyngeal muscle cell (C elegans) and 4 other cell types or tissues"/>
</dbReference>
<dbReference type="ExpressionAtlas" id="H2KZZ6">
    <property type="expression patterns" value="baseline and differential"/>
</dbReference>
<dbReference type="GO" id="GO:0005096">
    <property type="term" value="F:GTPase activator activity"/>
    <property type="evidence" value="ECO:0000318"/>
    <property type="project" value="GO_Central"/>
</dbReference>
<dbReference type="GO" id="GO:0031267">
    <property type="term" value="F:small GTPase binding"/>
    <property type="evidence" value="ECO:0000318"/>
    <property type="project" value="GO_Central"/>
</dbReference>
<dbReference type="GO" id="GO:0042335">
    <property type="term" value="P:cuticle development"/>
    <property type="evidence" value="ECO:0000315"/>
    <property type="project" value="UniProtKB"/>
</dbReference>
<dbReference type="GO" id="GO:0006403">
    <property type="term" value="P:RNA localization"/>
    <property type="evidence" value="ECO:0000315"/>
    <property type="project" value="UniProtKB"/>
</dbReference>
<dbReference type="FunFam" id="1.10.10.750:FF:000003">
    <property type="entry name" value="GTPase activating protein (Evi5)"/>
    <property type="match status" value="1"/>
</dbReference>
<dbReference type="FunFam" id="1.10.472.80:FF:000007">
    <property type="entry name" value="Rab GTPase-activating protein 1 isoform X1"/>
    <property type="match status" value="1"/>
</dbReference>
<dbReference type="FunFam" id="2.30.29.30:FF:000637">
    <property type="entry name" value="TBC (Tre-2/Bub2/Cdc16) domain family"/>
    <property type="match status" value="1"/>
</dbReference>
<dbReference type="FunFam" id="1.10.8.270:FF:000001">
    <property type="entry name" value="TBC1 domain family member 1"/>
    <property type="match status" value="1"/>
</dbReference>
<dbReference type="Gene3D" id="2.30.29.30">
    <property type="entry name" value="Pleckstrin-homology domain (PH domain)/Phosphotyrosine-binding domain (PTB)"/>
    <property type="match status" value="1"/>
</dbReference>
<dbReference type="Gene3D" id="1.10.8.270">
    <property type="entry name" value="putative rabgap domain of human tbc1 domain family member 14 like domains"/>
    <property type="match status" value="1"/>
</dbReference>
<dbReference type="Gene3D" id="1.10.10.750">
    <property type="entry name" value="Ypt/Rab-GAP domain of gyp1p, domain 1"/>
    <property type="match status" value="1"/>
</dbReference>
<dbReference type="Gene3D" id="1.10.472.80">
    <property type="entry name" value="Ypt/Rab-GAP domain of gyp1p, domain 3"/>
    <property type="match status" value="1"/>
</dbReference>
<dbReference type="InterPro" id="IPR022164">
    <property type="entry name" value="Kinesin-like"/>
</dbReference>
<dbReference type="InterPro" id="IPR011993">
    <property type="entry name" value="PH-like_dom_sf"/>
</dbReference>
<dbReference type="InterPro" id="IPR006020">
    <property type="entry name" value="PTB/PI_dom"/>
</dbReference>
<dbReference type="InterPro" id="IPR000195">
    <property type="entry name" value="Rab-GAP-TBC_dom"/>
</dbReference>
<dbReference type="InterPro" id="IPR035969">
    <property type="entry name" value="Rab-GAP_TBC_sf"/>
</dbReference>
<dbReference type="InterPro" id="IPR050302">
    <property type="entry name" value="Rab_GAP_TBC_domain"/>
</dbReference>
<dbReference type="PANTHER" id="PTHR47219:SF9">
    <property type="entry name" value="GTPASE ACTIVATING PROTEIN AND CENTROSOME-ASSOCIATED, ISOFORM B"/>
    <property type="match status" value="1"/>
</dbReference>
<dbReference type="PANTHER" id="PTHR47219">
    <property type="entry name" value="RAB GTPASE-ACTIVATING PROTEIN 1-LIKE"/>
    <property type="match status" value="1"/>
</dbReference>
<dbReference type="Pfam" id="PF12473">
    <property type="entry name" value="DUF3694"/>
    <property type="match status" value="1"/>
</dbReference>
<dbReference type="Pfam" id="PF00566">
    <property type="entry name" value="RabGAP-TBC"/>
    <property type="match status" value="1"/>
</dbReference>
<dbReference type="SMART" id="SM00462">
    <property type="entry name" value="PTB"/>
    <property type="match status" value="1"/>
</dbReference>
<dbReference type="SMART" id="SM00164">
    <property type="entry name" value="TBC"/>
    <property type="match status" value="1"/>
</dbReference>
<dbReference type="SUPFAM" id="SSF50729">
    <property type="entry name" value="PH domain-like"/>
    <property type="match status" value="1"/>
</dbReference>
<dbReference type="SUPFAM" id="SSF47923">
    <property type="entry name" value="Ypt/Rab-GAP domain of gyp1p"/>
    <property type="match status" value="2"/>
</dbReference>
<dbReference type="PROSITE" id="PS01179">
    <property type="entry name" value="PID"/>
    <property type="match status" value="1"/>
</dbReference>
<dbReference type="PROSITE" id="PS50086">
    <property type="entry name" value="TBC_RABGAP"/>
    <property type="match status" value="1"/>
</dbReference>